<accession>P59437</accession>
<gene>
    <name evidence="1" type="primary">nanK</name>
    <name type="ordered locus">SF3258</name>
    <name type="ordered locus">S3475</name>
</gene>
<keyword id="KW-0067">ATP-binding</keyword>
<keyword id="KW-0119">Carbohydrate metabolism</keyword>
<keyword id="KW-0418">Kinase</keyword>
<keyword id="KW-0479">Metal-binding</keyword>
<keyword id="KW-0547">Nucleotide-binding</keyword>
<keyword id="KW-1185">Reference proteome</keyword>
<keyword id="KW-0808">Transferase</keyword>
<keyword id="KW-0862">Zinc</keyword>
<evidence type="ECO:0000255" key="1">
    <source>
        <dbReference type="HAMAP-Rule" id="MF_01234"/>
    </source>
</evidence>
<evidence type="ECO:0000305" key="2"/>
<feature type="chain" id="PRO_0000095703" description="N-acetylmannosamine kinase">
    <location>
        <begin position="1"/>
        <end position="291"/>
    </location>
</feature>
<feature type="binding site" evidence="1">
    <location>
        <begin position="5"/>
        <end position="12"/>
    </location>
    <ligand>
        <name>ATP</name>
        <dbReference type="ChEBI" id="CHEBI:30616"/>
    </ligand>
</feature>
<feature type="binding site" evidence="1">
    <location>
        <begin position="132"/>
        <end position="139"/>
    </location>
    <ligand>
        <name>ATP</name>
        <dbReference type="ChEBI" id="CHEBI:30616"/>
    </ligand>
</feature>
<feature type="binding site" evidence="1">
    <location>
        <position position="156"/>
    </location>
    <ligand>
        <name>Zn(2+)</name>
        <dbReference type="ChEBI" id="CHEBI:29105"/>
    </ligand>
</feature>
<feature type="binding site" evidence="1">
    <location>
        <position position="166"/>
    </location>
    <ligand>
        <name>Zn(2+)</name>
        <dbReference type="ChEBI" id="CHEBI:29105"/>
    </ligand>
</feature>
<feature type="binding site" evidence="1">
    <location>
        <position position="168"/>
    </location>
    <ligand>
        <name>Zn(2+)</name>
        <dbReference type="ChEBI" id="CHEBI:29105"/>
    </ligand>
</feature>
<feature type="binding site" evidence="1">
    <location>
        <position position="173"/>
    </location>
    <ligand>
        <name>Zn(2+)</name>
        <dbReference type="ChEBI" id="CHEBI:29105"/>
    </ligand>
</feature>
<sequence length="291" mass="29698">MTILAIDIGGTKLAAALIGADGQIRDRRELPTPASQTPEALRDALSALVSPLQAHAQRVAIASTGIIRDGSLLALNPHNLGGLLHFPLVKTLEQLTNLPTIAINDAQAAAWAEYQALEGDITDMVFITVSTGVGGGVVSGGKLLTGPGGLAGHIGHTLADPHGPVCGCGRTGCVEAIASGRGIAAAAQGELAGADARTIFTRAGQGDEQAQQLIHRSARTLARLIADIKATTDCQCVVVGGSVGLAEGYLALVEMYLAQEPAAFHVDLLAAHYRHDAGLLGAALLAQGEKL</sequence>
<proteinExistence type="inferred from homology"/>
<protein>
    <recommendedName>
        <fullName evidence="1">N-acetylmannosamine kinase</fullName>
        <ecNumber evidence="1">2.7.1.60</ecNumber>
    </recommendedName>
    <alternativeName>
        <fullName evidence="1">ManNAc kinase</fullName>
    </alternativeName>
    <alternativeName>
        <fullName evidence="1">N-acetyl-D-mannosamine kinase</fullName>
    </alternativeName>
</protein>
<reference key="1">
    <citation type="journal article" date="2002" name="Nucleic Acids Res.">
        <title>Genome sequence of Shigella flexneri 2a: insights into pathogenicity through comparison with genomes of Escherichia coli K12 and O157.</title>
        <authorList>
            <person name="Jin Q."/>
            <person name="Yuan Z."/>
            <person name="Xu J."/>
            <person name="Wang Y."/>
            <person name="Shen Y."/>
            <person name="Lu W."/>
            <person name="Wang J."/>
            <person name="Liu H."/>
            <person name="Yang J."/>
            <person name="Yang F."/>
            <person name="Zhang X."/>
            <person name="Zhang J."/>
            <person name="Yang G."/>
            <person name="Wu H."/>
            <person name="Qu D."/>
            <person name="Dong J."/>
            <person name="Sun L."/>
            <person name="Xue Y."/>
            <person name="Zhao A."/>
            <person name="Gao Y."/>
            <person name="Zhu J."/>
            <person name="Kan B."/>
            <person name="Ding K."/>
            <person name="Chen S."/>
            <person name="Cheng H."/>
            <person name="Yao Z."/>
            <person name="He B."/>
            <person name="Chen R."/>
            <person name="Ma D."/>
            <person name="Qiang B."/>
            <person name="Wen Y."/>
            <person name="Hou Y."/>
            <person name="Yu J."/>
        </authorList>
    </citation>
    <scope>NUCLEOTIDE SEQUENCE [LARGE SCALE GENOMIC DNA]</scope>
    <source>
        <strain>301 / Serotype 2a</strain>
    </source>
</reference>
<reference key="2">
    <citation type="journal article" date="2003" name="Infect. Immun.">
        <title>Complete genome sequence and comparative genomics of Shigella flexneri serotype 2a strain 2457T.</title>
        <authorList>
            <person name="Wei J."/>
            <person name="Goldberg M.B."/>
            <person name="Burland V."/>
            <person name="Venkatesan M.M."/>
            <person name="Deng W."/>
            <person name="Fournier G."/>
            <person name="Mayhew G.F."/>
            <person name="Plunkett G. III"/>
            <person name="Rose D.J."/>
            <person name="Darling A."/>
            <person name="Mau B."/>
            <person name="Perna N.T."/>
            <person name="Payne S.M."/>
            <person name="Runyen-Janecky L.J."/>
            <person name="Zhou S."/>
            <person name="Schwartz D.C."/>
            <person name="Blattner F.R."/>
        </authorList>
    </citation>
    <scope>NUCLEOTIDE SEQUENCE [LARGE SCALE GENOMIC DNA]</scope>
    <source>
        <strain>ATCC 700930 / 2457T / Serotype 2a</strain>
    </source>
</reference>
<dbReference type="EC" id="2.7.1.60" evidence="1"/>
<dbReference type="EMBL" id="AE005674">
    <property type="protein sequence ID" value="AAN44722.2"/>
    <property type="status" value="ALT_INIT"/>
    <property type="molecule type" value="Genomic_DNA"/>
</dbReference>
<dbReference type="EMBL" id="AE014073">
    <property type="protein sequence ID" value="AAP18535.1"/>
    <property type="status" value="ALT_INIT"/>
    <property type="molecule type" value="Genomic_DNA"/>
</dbReference>
<dbReference type="RefSeq" id="WP_000153624.1">
    <property type="nucleotide sequence ID" value="NZ_WPGW01000176.1"/>
</dbReference>
<dbReference type="SMR" id="P59437"/>
<dbReference type="STRING" id="198214.SF3258"/>
<dbReference type="PaxDb" id="198214-SF3258"/>
<dbReference type="KEGG" id="sfl:SF3258"/>
<dbReference type="KEGG" id="sfx:S3475"/>
<dbReference type="PATRIC" id="fig|198214.7.peg.3861"/>
<dbReference type="HOGENOM" id="CLU_036604_0_4_6"/>
<dbReference type="UniPathway" id="UPA00629">
    <property type="reaction ID" value="UER00681"/>
</dbReference>
<dbReference type="Proteomes" id="UP000001006">
    <property type="component" value="Chromosome"/>
</dbReference>
<dbReference type="Proteomes" id="UP000002673">
    <property type="component" value="Chromosome"/>
</dbReference>
<dbReference type="GO" id="GO:0005524">
    <property type="term" value="F:ATP binding"/>
    <property type="evidence" value="ECO:0007669"/>
    <property type="project" value="UniProtKB-UniRule"/>
</dbReference>
<dbReference type="GO" id="GO:0009384">
    <property type="term" value="F:N-acylmannosamine kinase activity"/>
    <property type="evidence" value="ECO:0007669"/>
    <property type="project" value="UniProtKB-UniRule"/>
</dbReference>
<dbReference type="GO" id="GO:0008270">
    <property type="term" value="F:zinc ion binding"/>
    <property type="evidence" value="ECO:0007669"/>
    <property type="project" value="UniProtKB-UniRule"/>
</dbReference>
<dbReference type="GO" id="GO:0019262">
    <property type="term" value="P:N-acetylneuraminate catabolic process"/>
    <property type="evidence" value="ECO:0007669"/>
    <property type="project" value="UniProtKB-UniRule"/>
</dbReference>
<dbReference type="CDD" id="cd24069">
    <property type="entry name" value="ASKHA_NBD_ROK_EcNanK-like"/>
    <property type="match status" value="1"/>
</dbReference>
<dbReference type="FunFam" id="3.30.420.40:FF:000062">
    <property type="entry name" value="N-acetylmannosamine kinase"/>
    <property type="match status" value="1"/>
</dbReference>
<dbReference type="FunFam" id="3.30.420.40:FF:000063">
    <property type="entry name" value="N-acetylmannosamine kinase"/>
    <property type="match status" value="1"/>
</dbReference>
<dbReference type="Gene3D" id="3.30.420.40">
    <property type="match status" value="2"/>
</dbReference>
<dbReference type="HAMAP" id="MF_01234">
    <property type="entry name" value="ManNAc_kinase"/>
    <property type="match status" value="1"/>
</dbReference>
<dbReference type="InterPro" id="IPR043129">
    <property type="entry name" value="ATPase_NBD"/>
</dbReference>
<dbReference type="InterPro" id="IPR023945">
    <property type="entry name" value="ManNAc_kinase_bac"/>
</dbReference>
<dbReference type="InterPro" id="IPR000600">
    <property type="entry name" value="ROK"/>
</dbReference>
<dbReference type="InterPro" id="IPR049874">
    <property type="entry name" value="ROK_cs"/>
</dbReference>
<dbReference type="NCBIfam" id="NF047821">
    <property type="entry name" value="NactlManKinNanK"/>
    <property type="match status" value="1"/>
</dbReference>
<dbReference type="NCBIfam" id="NF003461">
    <property type="entry name" value="PRK05082.1"/>
    <property type="match status" value="1"/>
</dbReference>
<dbReference type="PANTHER" id="PTHR18964:SF169">
    <property type="entry name" value="N-ACETYLMANNOSAMINE KINASE"/>
    <property type="match status" value="1"/>
</dbReference>
<dbReference type="PANTHER" id="PTHR18964">
    <property type="entry name" value="ROK (REPRESSOR, ORF, KINASE) FAMILY"/>
    <property type="match status" value="1"/>
</dbReference>
<dbReference type="Pfam" id="PF00480">
    <property type="entry name" value="ROK"/>
    <property type="match status" value="1"/>
</dbReference>
<dbReference type="SUPFAM" id="SSF53067">
    <property type="entry name" value="Actin-like ATPase domain"/>
    <property type="match status" value="1"/>
</dbReference>
<dbReference type="PROSITE" id="PS01125">
    <property type="entry name" value="ROK"/>
    <property type="match status" value="1"/>
</dbReference>
<organism>
    <name type="scientific">Shigella flexneri</name>
    <dbReference type="NCBI Taxonomy" id="623"/>
    <lineage>
        <taxon>Bacteria</taxon>
        <taxon>Pseudomonadati</taxon>
        <taxon>Pseudomonadota</taxon>
        <taxon>Gammaproteobacteria</taxon>
        <taxon>Enterobacterales</taxon>
        <taxon>Enterobacteriaceae</taxon>
        <taxon>Shigella</taxon>
    </lineage>
</organism>
<name>NANK_SHIFL</name>
<comment type="function">
    <text evidence="1">Catalyzes the phosphorylation of N-acetylmannosamine (ManNAc) to ManNAc-6-P.</text>
</comment>
<comment type="catalytic activity">
    <reaction evidence="1">
        <text>an N-acyl-D-mannosamine + ATP = an N-acyl-D-mannosamine 6-phosphate + ADP + H(+)</text>
        <dbReference type="Rhea" id="RHEA:23832"/>
        <dbReference type="ChEBI" id="CHEBI:15378"/>
        <dbReference type="ChEBI" id="CHEBI:16062"/>
        <dbReference type="ChEBI" id="CHEBI:30616"/>
        <dbReference type="ChEBI" id="CHEBI:57666"/>
        <dbReference type="ChEBI" id="CHEBI:456216"/>
        <dbReference type="EC" id="2.7.1.60"/>
    </reaction>
</comment>
<comment type="pathway">
    <text evidence="1">Amino-sugar metabolism; N-acetylneuraminate degradation; D-fructose 6-phosphate from N-acetylneuraminate: step 2/5.</text>
</comment>
<comment type="subunit">
    <text evidence="1">Homodimer.</text>
</comment>
<comment type="similarity">
    <text evidence="1">Belongs to the ROK (NagC/XylR) family. NanK subfamily.</text>
</comment>
<comment type="sequence caution" evidence="2">
    <conflict type="erroneous initiation">
        <sequence resource="EMBL-CDS" id="AAN44722"/>
    </conflict>
    <text>Extended N-terminus.</text>
</comment>
<comment type="sequence caution" evidence="2">
    <conflict type="erroneous initiation">
        <sequence resource="EMBL-CDS" id="AAP18535"/>
    </conflict>
    <text>Extended N-terminus.</text>
</comment>